<sequence length="65" mass="7762">MEPACRKDKQKQQTPTRGDRTKQKTAQQELKQRQRAEIYALNKVMTELEQQQFEAFCKQMQSQSE</sequence>
<feature type="chain" id="PRO_0000359892" description="Small vasohibin-binding protein">
    <location>
        <begin position="1"/>
        <end position="65"/>
    </location>
</feature>
<feature type="region of interest" description="Disordered" evidence="5">
    <location>
        <begin position="1"/>
        <end position="30"/>
    </location>
</feature>
<feature type="coiled-coil region" evidence="4">
    <location>
        <begin position="31"/>
        <end position="51"/>
    </location>
</feature>
<feature type="compositionally biased region" description="Basic and acidic residues" evidence="5">
    <location>
        <begin position="1"/>
        <end position="22"/>
    </location>
</feature>
<accession>P0C8M3</accession>
<gene>
    <name evidence="2" type="primary">svbp</name>
    <name evidence="2" type="synonym">ccdc23</name>
</gene>
<proteinExistence type="inferred from homology"/>
<reference key="1">
    <citation type="journal article" date="2013" name="Nature">
        <title>The zebrafish reference genome sequence and its relationship to the human genome.</title>
        <authorList>
            <person name="Howe K."/>
            <person name="Clark M.D."/>
            <person name="Torroja C.F."/>
            <person name="Torrance J."/>
            <person name="Berthelot C."/>
            <person name="Muffato M."/>
            <person name="Collins J.E."/>
            <person name="Humphray S."/>
            <person name="McLaren K."/>
            <person name="Matthews L."/>
            <person name="McLaren S."/>
            <person name="Sealy I."/>
            <person name="Caccamo M."/>
            <person name="Churcher C."/>
            <person name="Scott C."/>
            <person name="Barrett J.C."/>
            <person name="Koch R."/>
            <person name="Rauch G.J."/>
            <person name="White S."/>
            <person name="Chow W."/>
            <person name="Kilian B."/>
            <person name="Quintais L.T."/>
            <person name="Guerra-Assuncao J.A."/>
            <person name="Zhou Y."/>
            <person name="Gu Y."/>
            <person name="Yen J."/>
            <person name="Vogel J.H."/>
            <person name="Eyre T."/>
            <person name="Redmond S."/>
            <person name="Banerjee R."/>
            <person name="Chi J."/>
            <person name="Fu B."/>
            <person name="Langley E."/>
            <person name="Maguire S.F."/>
            <person name="Laird G.K."/>
            <person name="Lloyd D."/>
            <person name="Kenyon E."/>
            <person name="Donaldson S."/>
            <person name="Sehra H."/>
            <person name="Almeida-King J."/>
            <person name="Loveland J."/>
            <person name="Trevanion S."/>
            <person name="Jones M."/>
            <person name="Quail M."/>
            <person name="Willey D."/>
            <person name="Hunt A."/>
            <person name="Burton J."/>
            <person name="Sims S."/>
            <person name="McLay K."/>
            <person name="Plumb B."/>
            <person name="Davis J."/>
            <person name="Clee C."/>
            <person name="Oliver K."/>
            <person name="Clark R."/>
            <person name="Riddle C."/>
            <person name="Elliot D."/>
            <person name="Threadgold G."/>
            <person name="Harden G."/>
            <person name="Ware D."/>
            <person name="Begum S."/>
            <person name="Mortimore B."/>
            <person name="Kerry G."/>
            <person name="Heath P."/>
            <person name="Phillimore B."/>
            <person name="Tracey A."/>
            <person name="Corby N."/>
            <person name="Dunn M."/>
            <person name="Johnson C."/>
            <person name="Wood J."/>
            <person name="Clark S."/>
            <person name="Pelan S."/>
            <person name="Griffiths G."/>
            <person name="Smith M."/>
            <person name="Glithero R."/>
            <person name="Howden P."/>
            <person name="Barker N."/>
            <person name="Lloyd C."/>
            <person name="Stevens C."/>
            <person name="Harley J."/>
            <person name="Holt K."/>
            <person name="Panagiotidis G."/>
            <person name="Lovell J."/>
            <person name="Beasley H."/>
            <person name="Henderson C."/>
            <person name="Gordon D."/>
            <person name="Auger K."/>
            <person name="Wright D."/>
            <person name="Collins J."/>
            <person name="Raisen C."/>
            <person name="Dyer L."/>
            <person name="Leung K."/>
            <person name="Robertson L."/>
            <person name="Ambridge K."/>
            <person name="Leongamornlert D."/>
            <person name="McGuire S."/>
            <person name="Gilderthorp R."/>
            <person name="Griffiths C."/>
            <person name="Manthravadi D."/>
            <person name="Nichol S."/>
            <person name="Barker G."/>
            <person name="Whitehead S."/>
            <person name="Kay M."/>
            <person name="Brown J."/>
            <person name="Murnane C."/>
            <person name="Gray E."/>
            <person name="Humphries M."/>
            <person name="Sycamore N."/>
            <person name="Barker D."/>
            <person name="Saunders D."/>
            <person name="Wallis J."/>
            <person name="Babbage A."/>
            <person name="Hammond S."/>
            <person name="Mashreghi-Mohammadi M."/>
            <person name="Barr L."/>
            <person name="Martin S."/>
            <person name="Wray P."/>
            <person name="Ellington A."/>
            <person name="Matthews N."/>
            <person name="Ellwood M."/>
            <person name="Woodmansey R."/>
            <person name="Clark G."/>
            <person name="Cooper J."/>
            <person name="Tromans A."/>
            <person name="Grafham D."/>
            <person name="Skuce C."/>
            <person name="Pandian R."/>
            <person name="Andrews R."/>
            <person name="Harrison E."/>
            <person name="Kimberley A."/>
            <person name="Garnett J."/>
            <person name="Fosker N."/>
            <person name="Hall R."/>
            <person name="Garner P."/>
            <person name="Kelly D."/>
            <person name="Bird C."/>
            <person name="Palmer S."/>
            <person name="Gehring I."/>
            <person name="Berger A."/>
            <person name="Dooley C.M."/>
            <person name="Ersan-Urun Z."/>
            <person name="Eser C."/>
            <person name="Geiger H."/>
            <person name="Geisler M."/>
            <person name="Karotki L."/>
            <person name="Kirn A."/>
            <person name="Konantz J."/>
            <person name="Konantz M."/>
            <person name="Oberlander M."/>
            <person name="Rudolph-Geiger S."/>
            <person name="Teucke M."/>
            <person name="Lanz C."/>
            <person name="Raddatz G."/>
            <person name="Osoegawa K."/>
            <person name="Zhu B."/>
            <person name="Rapp A."/>
            <person name="Widaa S."/>
            <person name="Langford C."/>
            <person name="Yang F."/>
            <person name="Schuster S.C."/>
            <person name="Carter N.P."/>
            <person name="Harrow J."/>
            <person name="Ning Z."/>
            <person name="Herrero J."/>
            <person name="Searle S.M."/>
            <person name="Enright A."/>
            <person name="Geisler R."/>
            <person name="Plasterk R.H."/>
            <person name="Lee C."/>
            <person name="Westerfield M."/>
            <person name="de Jong P.J."/>
            <person name="Zon L.I."/>
            <person name="Postlethwait J.H."/>
            <person name="Nusslein-Volhard C."/>
            <person name="Hubbard T.J."/>
            <person name="Roest Crollius H."/>
            <person name="Rogers J."/>
            <person name="Stemple D.L."/>
        </authorList>
    </citation>
    <scope>NUCLEOTIDE SEQUENCE [LARGE SCALE GENOMIC DNA]</scope>
    <source>
        <strain>Tuebingen</strain>
    </source>
</reference>
<comment type="function">
    <text evidence="1 2">Enhances the tyrosine carboxypeptidase activity of vash1 and vash2, thereby promoting the removal of the C-terminal tyrosine residue of alpha-tubulin. Also required to enhance the solubility and secretion of vash1 and vash2. May play a role in axon and excitatory synapse formation (By similarity).</text>
</comment>
<comment type="subcellular location">
    <subcellularLocation>
        <location evidence="3">Cytoplasm</location>
    </subcellularLocation>
    <subcellularLocation>
        <location evidence="3">Secreted</location>
    </subcellularLocation>
    <subcellularLocation>
        <location evidence="2">Cytoplasm</location>
        <location evidence="2">Cytoskeleton</location>
    </subcellularLocation>
    <text evidence="3">Detected both intracellularly and extracellularly. Within cells, localizes mainly to the apical part of the cell.</text>
</comment>
<comment type="similarity">
    <text evidence="6">Belongs to the SVBP family.</text>
</comment>
<keyword id="KW-0175">Coiled coil</keyword>
<keyword id="KW-0963">Cytoplasm</keyword>
<keyword id="KW-0206">Cytoskeleton</keyword>
<keyword id="KW-1185">Reference proteome</keyword>
<keyword id="KW-0964">Secreted</keyword>
<protein>
    <recommendedName>
        <fullName evidence="2">Small vasohibin-binding protein</fullName>
    </recommendedName>
    <alternativeName>
        <fullName evidence="2">Coiled-coil domain-containing protein 23</fullName>
    </alternativeName>
</protein>
<evidence type="ECO:0000250" key="1">
    <source>
        <dbReference type="UniProtKB" id="Q4KLG3"/>
    </source>
</evidence>
<evidence type="ECO:0000250" key="2">
    <source>
        <dbReference type="UniProtKB" id="Q8N300"/>
    </source>
</evidence>
<evidence type="ECO:0000250" key="3">
    <source>
        <dbReference type="UniProtKB" id="Q99LQ4"/>
    </source>
</evidence>
<evidence type="ECO:0000255" key="4"/>
<evidence type="ECO:0000256" key="5">
    <source>
        <dbReference type="SAM" id="MobiDB-lite"/>
    </source>
</evidence>
<evidence type="ECO:0000305" key="6"/>
<organism>
    <name type="scientific">Danio rerio</name>
    <name type="common">Zebrafish</name>
    <name type="synonym">Brachydanio rerio</name>
    <dbReference type="NCBI Taxonomy" id="7955"/>
    <lineage>
        <taxon>Eukaryota</taxon>
        <taxon>Metazoa</taxon>
        <taxon>Chordata</taxon>
        <taxon>Craniata</taxon>
        <taxon>Vertebrata</taxon>
        <taxon>Euteleostomi</taxon>
        <taxon>Actinopterygii</taxon>
        <taxon>Neopterygii</taxon>
        <taxon>Teleostei</taxon>
        <taxon>Ostariophysi</taxon>
        <taxon>Cypriniformes</taxon>
        <taxon>Danionidae</taxon>
        <taxon>Danioninae</taxon>
        <taxon>Danio</taxon>
    </lineage>
</organism>
<dbReference type="RefSeq" id="NP_001189361.1">
    <property type="nucleotide sequence ID" value="NM_001202432.2"/>
</dbReference>
<dbReference type="SMR" id="P0C8M3"/>
<dbReference type="FunCoup" id="P0C8M3">
    <property type="interactions" value="1283"/>
</dbReference>
<dbReference type="STRING" id="7955.ENSDARP00000136802"/>
<dbReference type="PaxDb" id="7955-ENSDARP00000108444"/>
<dbReference type="Ensembl" id="ENSDART00000167495">
    <property type="protein sequence ID" value="ENSDARP00000136802"/>
    <property type="gene ID" value="ENSDARG00000102305"/>
</dbReference>
<dbReference type="GeneID" id="798425"/>
<dbReference type="KEGG" id="dre:798425"/>
<dbReference type="AGR" id="ZFIN:ZDB-GENE-140106-191"/>
<dbReference type="CTD" id="374969"/>
<dbReference type="ZFIN" id="ZDB-GENE-140106-191">
    <property type="gene designation" value="svbp"/>
</dbReference>
<dbReference type="eggNOG" id="ENOG502S99I">
    <property type="taxonomic scope" value="Eukaryota"/>
</dbReference>
<dbReference type="HOGENOM" id="CLU_2830589_0_0_1"/>
<dbReference type="InParanoid" id="P0C8M3"/>
<dbReference type="OMA" id="AMDPPAR"/>
<dbReference type="OrthoDB" id="10035051at2759"/>
<dbReference type="PhylomeDB" id="P0C8M3"/>
<dbReference type="TreeFam" id="TF344015"/>
<dbReference type="PRO" id="PR:P0C8M3"/>
<dbReference type="Proteomes" id="UP000000437">
    <property type="component" value="Chromosome 11"/>
</dbReference>
<dbReference type="Bgee" id="ENSDARG00000102305">
    <property type="expression patterns" value="Expressed in somite and 26 other cell types or tissues"/>
</dbReference>
<dbReference type="GO" id="GO:0045177">
    <property type="term" value="C:apical part of cell"/>
    <property type="evidence" value="ECO:0000318"/>
    <property type="project" value="GO_Central"/>
</dbReference>
<dbReference type="GO" id="GO:0005737">
    <property type="term" value="C:cytoplasm"/>
    <property type="evidence" value="ECO:0007669"/>
    <property type="project" value="UniProtKB-SubCell"/>
</dbReference>
<dbReference type="GO" id="GO:0005856">
    <property type="term" value="C:cytoskeleton"/>
    <property type="evidence" value="ECO:0007669"/>
    <property type="project" value="UniProtKB-SubCell"/>
</dbReference>
<dbReference type="GO" id="GO:0005576">
    <property type="term" value="C:extracellular region"/>
    <property type="evidence" value="ECO:0007669"/>
    <property type="project" value="UniProtKB-SubCell"/>
</dbReference>
<dbReference type="GO" id="GO:0008017">
    <property type="term" value="F:microtubule binding"/>
    <property type="evidence" value="ECO:0000250"/>
    <property type="project" value="UniProtKB"/>
</dbReference>
<dbReference type="GO" id="GO:0061564">
    <property type="term" value="P:axon development"/>
    <property type="evidence" value="ECO:0000250"/>
    <property type="project" value="UniProtKB"/>
</dbReference>
<dbReference type="GO" id="GO:0031397">
    <property type="term" value="P:negative regulation of protein ubiquitination"/>
    <property type="evidence" value="ECO:0000318"/>
    <property type="project" value="GO_Central"/>
</dbReference>
<dbReference type="GO" id="GO:0009306">
    <property type="term" value="P:protein secretion"/>
    <property type="evidence" value="ECO:0000318"/>
    <property type="project" value="GO_Central"/>
</dbReference>
<dbReference type="GO" id="GO:0006508">
    <property type="term" value="P:proteolysis"/>
    <property type="evidence" value="ECO:0000250"/>
    <property type="project" value="UniProtKB"/>
</dbReference>
<dbReference type="GO" id="GO:1905048">
    <property type="term" value="P:regulation of metallopeptidase activity"/>
    <property type="evidence" value="ECO:0000250"/>
    <property type="project" value="UniProtKB"/>
</dbReference>
<dbReference type="InterPro" id="IPR031378">
    <property type="entry name" value="SVBP"/>
</dbReference>
<dbReference type="PANTHER" id="PTHR34762">
    <property type="entry name" value="SMALL VASOHIBIN-BINDING PROTEIN"/>
    <property type="match status" value="1"/>
</dbReference>
<dbReference type="PANTHER" id="PTHR34762:SF1">
    <property type="entry name" value="SMALL VASOHIBIN-BINDING PROTEIN"/>
    <property type="match status" value="1"/>
</dbReference>
<dbReference type="Pfam" id="PF15674">
    <property type="entry name" value="CCDC23"/>
    <property type="match status" value="1"/>
</dbReference>
<name>SVBP_DANRE</name>